<sequence>MKLHEIAPQPGSTKRRRRVGRGVSAGQGASCGLGMRGQKSRSGTGTRPGFEGGQMPLYRRVPKLKHFPLVNPRQYTIVNLRKLASLPANTEVTLESLLKAKILTSNDGPLKVLGDGEITVPLKVKAAAFSNSAKEKITAAQGTWEEI</sequence>
<comment type="function">
    <text evidence="1">Binds to the 23S rRNA.</text>
</comment>
<comment type="subunit">
    <text evidence="1">Part of the 50S ribosomal subunit.</text>
</comment>
<comment type="similarity">
    <text evidence="1">Belongs to the universal ribosomal protein uL15 family.</text>
</comment>
<feature type="chain" id="PRO_1000086719" description="Large ribosomal subunit protein uL15">
    <location>
        <begin position="1"/>
        <end position="147"/>
    </location>
</feature>
<feature type="region of interest" description="Disordered" evidence="2">
    <location>
        <begin position="1"/>
        <end position="55"/>
    </location>
</feature>
<feature type="compositionally biased region" description="Gly residues" evidence="2">
    <location>
        <begin position="23"/>
        <end position="35"/>
    </location>
</feature>
<protein>
    <recommendedName>
        <fullName evidence="1">Large ribosomal subunit protein uL15</fullName>
    </recommendedName>
    <alternativeName>
        <fullName evidence="3">50S ribosomal protein L15</fullName>
    </alternativeName>
</protein>
<reference key="1">
    <citation type="journal article" date="2007" name="DNA Res.">
        <title>Complete genomic structure of the bloom-forming toxic cyanobacterium Microcystis aeruginosa NIES-843.</title>
        <authorList>
            <person name="Kaneko T."/>
            <person name="Nakajima N."/>
            <person name="Okamoto S."/>
            <person name="Suzuki I."/>
            <person name="Tanabe Y."/>
            <person name="Tamaoki M."/>
            <person name="Nakamura Y."/>
            <person name="Kasai F."/>
            <person name="Watanabe A."/>
            <person name="Kawashima K."/>
            <person name="Kishida Y."/>
            <person name="Ono A."/>
            <person name="Shimizu Y."/>
            <person name="Takahashi C."/>
            <person name="Minami C."/>
            <person name="Fujishiro T."/>
            <person name="Kohara M."/>
            <person name="Katoh M."/>
            <person name="Nakazaki N."/>
            <person name="Nakayama S."/>
            <person name="Yamada M."/>
            <person name="Tabata S."/>
            <person name="Watanabe M.M."/>
        </authorList>
    </citation>
    <scope>NUCLEOTIDE SEQUENCE [LARGE SCALE GENOMIC DNA]</scope>
    <source>
        <strain>NIES-843 / IAM M-247</strain>
    </source>
</reference>
<evidence type="ECO:0000255" key="1">
    <source>
        <dbReference type="HAMAP-Rule" id="MF_01341"/>
    </source>
</evidence>
<evidence type="ECO:0000256" key="2">
    <source>
        <dbReference type="SAM" id="MobiDB-lite"/>
    </source>
</evidence>
<evidence type="ECO:0000305" key="3"/>
<gene>
    <name evidence="1" type="primary">rplO</name>
    <name type="ordered locus">MAE_57260</name>
</gene>
<proteinExistence type="inferred from homology"/>
<accession>B0JHY6</accession>
<keyword id="KW-0687">Ribonucleoprotein</keyword>
<keyword id="KW-0689">Ribosomal protein</keyword>
<keyword id="KW-0694">RNA-binding</keyword>
<keyword id="KW-0699">rRNA-binding</keyword>
<name>RL15_MICAN</name>
<dbReference type="EMBL" id="AP009552">
    <property type="protein sequence ID" value="BAG05548.1"/>
    <property type="molecule type" value="Genomic_DNA"/>
</dbReference>
<dbReference type="RefSeq" id="WP_002780095.1">
    <property type="nucleotide sequence ID" value="NC_010296.1"/>
</dbReference>
<dbReference type="SMR" id="B0JHY6"/>
<dbReference type="STRING" id="449447.MAE_57260"/>
<dbReference type="PaxDb" id="449447-MAE_57260"/>
<dbReference type="EnsemblBacteria" id="BAG05548">
    <property type="protein sequence ID" value="BAG05548"/>
    <property type="gene ID" value="MAE_57260"/>
</dbReference>
<dbReference type="KEGG" id="mar:MAE_57260"/>
<dbReference type="eggNOG" id="COG0200">
    <property type="taxonomic scope" value="Bacteria"/>
</dbReference>
<dbReference type="HOGENOM" id="CLU_055188_4_2_3"/>
<dbReference type="BioCyc" id="MAER449447:MAE_RS24945-MONOMER"/>
<dbReference type="Proteomes" id="UP000001510">
    <property type="component" value="Chromosome"/>
</dbReference>
<dbReference type="GO" id="GO:0022625">
    <property type="term" value="C:cytosolic large ribosomal subunit"/>
    <property type="evidence" value="ECO:0007669"/>
    <property type="project" value="TreeGrafter"/>
</dbReference>
<dbReference type="GO" id="GO:0019843">
    <property type="term" value="F:rRNA binding"/>
    <property type="evidence" value="ECO:0007669"/>
    <property type="project" value="UniProtKB-UniRule"/>
</dbReference>
<dbReference type="GO" id="GO:0003735">
    <property type="term" value="F:structural constituent of ribosome"/>
    <property type="evidence" value="ECO:0007669"/>
    <property type="project" value="InterPro"/>
</dbReference>
<dbReference type="GO" id="GO:0006412">
    <property type="term" value="P:translation"/>
    <property type="evidence" value="ECO:0007669"/>
    <property type="project" value="UniProtKB-UniRule"/>
</dbReference>
<dbReference type="Gene3D" id="3.100.10.10">
    <property type="match status" value="1"/>
</dbReference>
<dbReference type="HAMAP" id="MF_01341">
    <property type="entry name" value="Ribosomal_uL15"/>
    <property type="match status" value="1"/>
</dbReference>
<dbReference type="InterPro" id="IPR030878">
    <property type="entry name" value="Ribosomal_uL15"/>
</dbReference>
<dbReference type="InterPro" id="IPR021131">
    <property type="entry name" value="Ribosomal_uL15/eL18"/>
</dbReference>
<dbReference type="InterPro" id="IPR036227">
    <property type="entry name" value="Ribosomal_uL15/eL18_sf"/>
</dbReference>
<dbReference type="InterPro" id="IPR005749">
    <property type="entry name" value="Ribosomal_uL15_bac-type"/>
</dbReference>
<dbReference type="NCBIfam" id="TIGR01071">
    <property type="entry name" value="rplO_bact"/>
    <property type="match status" value="1"/>
</dbReference>
<dbReference type="PANTHER" id="PTHR12934">
    <property type="entry name" value="50S RIBOSOMAL PROTEIN L15"/>
    <property type="match status" value="1"/>
</dbReference>
<dbReference type="PANTHER" id="PTHR12934:SF11">
    <property type="entry name" value="LARGE RIBOSOMAL SUBUNIT PROTEIN UL15M"/>
    <property type="match status" value="1"/>
</dbReference>
<dbReference type="Pfam" id="PF00828">
    <property type="entry name" value="Ribosomal_L27A"/>
    <property type="match status" value="1"/>
</dbReference>
<dbReference type="SUPFAM" id="SSF52080">
    <property type="entry name" value="Ribosomal proteins L15p and L18e"/>
    <property type="match status" value="1"/>
</dbReference>
<organism>
    <name type="scientific">Microcystis aeruginosa (strain NIES-843 / IAM M-2473)</name>
    <dbReference type="NCBI Taxonomy" id="449447"/>
    <lineage>
        <taxon>Bacteria</taxon>
        <taxon>Bacillati</taxon>
        <taxon>Cyanobacteriota</taxon>
        <taxon>Cyanophyceae</taxon>
        <taxon>Oscillatoriophycideae</taxon>
        <taxon>Chroococcales</taxon>
        <taxon>Microcystaceae</taxon>
        <taxon>Microcystis</taxon>
    </lineage>
</organism>